<dbReference type="EC" id="2.1.1.-" evidence="1"/>
<dbReference type="EMBL" id="BX284604">
    <property type="protein sequence ID" value="CCD69511.2"/>
    <property type="molecule type" value="Genomic_DNA"/>
</dbReference>
<dbReference type="PIR" id="T32633">
    <property type="entry name" value="T32633"/>
</dbReference>
<dbReference type="RefSeq" id="NP_001379880.1">
    <property type="nucleotide sequence ID" value="NM_001392293.1"/>
</dbReference>
<dbReference type="RefSeq" id="NP_500539.2">
    <property type="nucleotide sequence ID" value="NM_068138.4"/>
</dbReference>
<dbReference type="FunCoup" id="O44498">
    <property type="interactions" value="1582"/>
</dbReference>
<dbReference type="STRING" id="6239.F15E6.1.1"/>
<dbReference type="PaxDb" id="6239-F15E6.1"/>
<dbReference type="PeptideAtlas" id="O44498"/>
<dbReference type="EnsemblMetazoa" id="F15E6.1.1">
    <property type="protein sequence ID" value="F15E6.1.1"/>
    <property type="gene ID" value="WBGene00017482"/>
</dbReference>
<dbReference type="GeneID" id="177196"/>
<dbReference type="UCSC" id="F15E6.1">
    <property type="organism name" value="c. elegans"/>
</dbReference>
<dbReference type="AGR" id="WB:WBGene00017482"/>
<dbReference type="WormBase" id="F15E6.1">
    <property type="protein sequence ID" value="CE48653"/>
    <property type="gene ID" value="WBGene00017482"/>
    <property type="gene designation" value="set-9"/>
</dbReference>
<dbReference type="eggNOG" id="KOG1844">
    <property type="taxonomic scope" value="Eukaryota"/>
</dbReference>
<dbReference type="GeneTree" id="ENSGT00940000168747"/>
<dbReference type="HOGENOM" id="CLU_243457_0_0_1"/>
<dbReference type="InParanoid" id="O44498"/>
<dbReference type="OMA" id="ETTHIAC"/>
<dbReference type="OrthoDB" id="5877798at2759"/>
<dbReference type="PRO" id="PR:O44498"/>
<dbReference type="Proteomes" id="UP000001940">
    <property type="component" value="Chromosome IV"/>
</dbReference>
<dbReference type="Bgee" id="WBGene00017482">
    <property type="expression patterns" value="Expressed in adult organism and 2 other cell types or tissues"/>
</dbReference>
<dbReference type="GO" id="GO:0005634">
    <property type="term" value="C:nucleus"/>
    <property type="evidence" value="ECO:0000318"/>
    <property type="project" value="GO_Central"/>
</dbReference>
<dbReference type="GO" id="GO:0042054">
    <property type="term" value="F:histone methyltransferase activity"/>
    <property type="evidence" value="ECO:0007669"/>
    <property type="project" value="RHEA"/>
</dbReference>
<dbReference type="GO" id="GO:0008270">
    <property type="term" value="F:zinc ion binding"/>
    <property type="evidence" value="ECO:0007669"/>
    <property type="project" value="UniProtKB-KW"/>
</dbReference>
<dbReference type="GO" id="GO:0008340">
    <property type="term" value="P:determination of adult lifespan"/>
    <property type="evidence" value="ECO:0000315"/>
    <property type="project" value="WormBase"/>
</dbReference>
<dbReference type="GO" id="GO:0032259">
    <property type="term" value="P:methylation"/>
    <property type="evidence" value="ECO:0007669"/>
    <property type="project" value="UniProtKB-KW"/>
</dbReference>
<dbReference type="CDD" id="cd15570">
    <property type="entry name" value="PHD_Bye1p_SIZ1_like"/>
    <property type="match status" value="1"/>
</dbReference>
<dbReference type="CDD" id="cd10529">
    <property type="entry name" value="SET_SETD5-like"/>
    <property type="match status" value="1"/>
</dbReference>
<dbReference type="FunFam" id="2.170.270.10:FF:000096">
    <property type="entry name" value="Histone-lysine N-methyltransferase set-26"/>
    <property type="match status" value="1"/>
</dbReference>
<dbReference type="Gene3D" id="2.170.270.10">
    <property type="entry name" value="SET domain"/>
    <property type="match status" value="1"/>
</dbReference>
<dbReference type="Gene3D" id="3.30.40.10">
    <property type="entry name" value="Zinc/RING finger domain, C3HC4 (zinc finger)"/>
    <property type="match status" value="1"/>
</dbReference>
<dbReference type="InterPro" id="IPR001214">
    <property type="entry name" value="SET_dom"/>
</dbReference>
<dbReference type="InterPro" id="IPR046341">
    <property type="entry name" value="SET_dom_sf"/>
</dbReference>
<dbReference type="InterPro" id="IPR019786">
    <property type="entry name" value="Zinc_finger_PHD-type_CS"/>
</dbReference>
<dbReference type="InterPro" id="IPR011011">
    <property type="entry name" value="Znf_FYVE_PHD"/>
</dbReference>
<dbReference type="InterPro" id="IPR001965">
    <property type="entry name" value="Znf_PHD"/>
</dbReference>
<dbReference type="InterPro" id="IPR013083">
    <property type="entry name" value="Znf_RING/FYVE/PHD"/>
</dbReference>
<dbReference type="PANTHER" id="PTHR14571">
    <property type="entry name" value="HISTONE-LYSINE N-METHYLTRANSFERASE SET-26-RELATED"/>
    <property type="match status" value="1"/>
</dbReference>
<dbReference type="PANTHER" id="PTHR14571:SF9">
    <property type="entry name" value="HISTONE-LYSINE N-METHYLTRANSFERASE SET-26-RELATED"/>
    <property type="match status" value="1"/>
</dbReference>
<dbReference type="Pfam" id="PF20826">
    <property type="entry name" value="PHD_5"/>
    <property type="match status" value="1"/>
</dbReference>
<dbReference type="Pfam" id="PF00856">
    <property type="entry name" value="SET"/>
    <property type="match status" value="1"/>
</dbReference>
<dbReference type="SMART" id="SM00249">
    <property type="entry name" value="PHD"/>
    <property type="match status" value="1"/>
</dbReference>
<dbReference type="SMART" id="SM00317">
    <property type="entry name" value="SET"/>
    <property type="match status" value="1"/>
</dbReference>
<dbReference type="SUPFAM" id="SSF57903">
    <property type="entry name" value="FYVE/PHD zinc finger"/>
    <property type="match status" value="1"/>
</dbReference>
<dbReference type="SUPFAM" id="SSF82199">
    <property type="entry name" value="SET domain"/>
    <property type="match status" value="1"/>
</dbReference>
<dbReference type="PROSITE" id="PS01359">
    <property type="entry name" value="ZF_PHD_1"/>
    <property type="match status" value="1"/>
</dbReference>
<evidence type="ECO:0000250" key="1">
    <source>
        <dbReference type="UniProtKB" id="Q9U263"/>
    </source>
</evidence>
<evidence type="ECO:0000255" key="2"/>
<evidence type="ECO:0000255" key="3">
    <source>
        <dbReference type="PROSITE-ProRule" id="PRU00146"/>
    </source>
</evidence>
<evidence type="ECO:0000255" key="4">
    <source>
        <dbReference type="PROSITE-ProRule" id="PRU00190"/>
    </source>
</evidence>
<evidence type="ECO:0000256" key="5">
    <source>
        <dbReference type="SAM" id="MobiDB-lite"/>
    </source>
</evidence>
<evidence type="ECO:0000269" key="6">
    <source>
    </source>
</evidence>
<evidence type="ECO:0000269" key="7">
    <source>
    </source>
</evidence>
<evidence type="ECO:0000303" key="8">
    <source>
    </source>
</evidence>
<evidence type="ECO:0000305" key="9"/>
<evidence type="ECO:0000312" key="10">
    <source>
        <dbReference type="Proteomes" id="UP000001940"/>
    </source>
</evidence>
<evidence type="ECO:0000312" key="11">
    <source>
        <dbReference type="WormBase" id="F15E6.1"/>
    </source>
</evidence>
<keyword id="KW-0175">Coiled coil</keyword>
<keyword id="KW-0479">Metal-binding</keyword>
<keyword id="KW-0489">Methyltransferase</keyword>
<keyword id="KW-0539">Nucleus</keyword>
<keyword id="KW-1185">Reference proteome</keyword>
<keyword id="KW-0949">S-adenosyl-L-methionine</keyword>
<keyword id="KW-0808">Transferase</keyword>
<keyword id="KW-0862">Zinc</keyword>
<keyword id="KW-0863">Zinc-finger</keyword>
<reference evidence="10" key="1">
    <citation type="journal article" date="1998" name="Science">
        <title>Genome sequence of the nematode C. elegans: a platform for investigating biology.</title>
        <authorList>
            <consortium name="The C. elegans sequencing consortium"/>
        </authorList>
    </citation>
    <scope>NUCLEOTIDE SEQUENCE [LARGE SCALE GENOMIC DNA]</scope>
    <source>
        <strain evidence="10">Bristol N2</strain>
    </source>
</reference>
<reference evidence="9" key="2">
    <citation type="journal article" date="2012" name="Aging Cell">
        <title>Two SET domain containing genes link epigenetic changes and aging in Caenorhabditis elegans.</title>
        <authorList>
            <person name="Ni Z."/>
            <person name="Ebata A."/>
            <person name="Alipanahiramandi E."/>
            <person name="Lee S.S."/>
        </authorList>
    </citation>
    <scope>FUNCTION</scope>
    <scope>SUBCELLULAR LOCATION</scope>
    <scope>TISSUE SPECIFICITY</scope>
    <scope>DISRUPTION PHENOTYPE</scope>
</reference>
<reference key="3">
    <citation type="journal article" date="2018" name="Elife">
        <title>SET-9 and SET-26 are H3K4me3 readers and play critical roles in germline development and longevity.</title>
        <authorList>
            <person name="Wang W."/>
            <person name="Chaturbedi A."/>
            <person name="Wang M."/>
            <person name="An S."/>
            <person name="Santhi S."/>
            <person name="Lee S.S."/>
        </authorList>
    </citation>
    <scope>FUNCTION</scope>
    <scope>SUBCELLULAR LOCATION</scope>
    <scope>TISSUE SPECIFICITY</scope>
    <scope>DOMAIN</scope>
</reference>
<comment type="function">
    <text evidence="1 6 7">Histone methyltransferase (By similarity). Might play a role in transcriptional regulation (PubMed:29714684). Together with set-26, negatively regulates lifespan in a germline-independent, partially daf-16-dependent fashion (PubMed:22212395, PubMed:29714684). Together with set-26, plays a role in germline development and maintenance and might play a role in the restriction of the trimethylation mark on histone H3 'Lys-4'(H3K4me3) to target genes specifically in the germline (PubMed:29714684).</text>
</comment>
<comment type="catalytic activity">
    <reaction evidence="1">
        <text>L-lysyl-[histone] + S-adenosyl-L-methionine = N(6)-methyl-L-lysyl-[histone] + S-adenosyl-L-homocysteine + H(+)</text>
        <dbReference type="Rhea" id="RHEA:10024"/>
        <dbReference type="Rhea" id="RHEA-COMP:9845"/>
        <dbReference type="Rhea" id="RHEA-COMP:9846"/>
        <dbReference type="ChEBI" id="CHEBI:15378"/>
        <dbReference type="ChEBI" id="CHEBI:29969"/>
        <dbReference type="ChEBI" id="CHEBI:57856"/>
        <dbReference type="ChEBI" id="CHEBI:59789"/>
        <dbReference type="ChEBI" id="CHEBI:61929"/>
    </reaction>
</comment>
<comment type="subcellular location">
    <subcellularLocation>
        <location evidence="6 7">Nucleus</location>
    </subcellularLocation>
</comment>
<comment type="tissue specificity">
    <text evidence="6 7">Predominantly expressed in the germline (at protein level).</text>
</comment>
<comment type="domain">
    <text evidence="7">The PHD-type domain binds histone H3 when trimethylated at 'Lys-4' (H3K4me3) in combination with a nearby acetylation (K9ac, K14ac and/or K18ac), but not H3K4me3 alone.</text>
</comment>
<comment type="disruption phenotype">
    <text evidence="6">Simultaneous RNAi-mediated knockdown of set-9 and set-26 results in extended lifespan.</text>
</comment>
<comment type="similarity">
    <text evidence="9">Belongs to the class V-like SAM-binding methyltransferase superfamily.</text>
</comment>
<comment type="caution">
    <text evidence="8">Contrary to other SET-domain containing methyltransferases, set-9 does not have the residues usually involved in cofactor binding: instead of the highly conserved XGXG, Y and NH motifs, set-9 displays AVEA (Ala-940-Ala-943), V (Val-959) and F (Phe-1055) and RR (Arg-1016-Arg-1017) motifs.</text>
</comment>
<feature type="chain" id="PRO_0000438926" description="Histone-lysine N-methyltransferase set-9">
    <location>
        <begin position="1"/>
        <end position="1623"/>
    </location>
</feature>
<feature type="domain" description="SET" evidence="4">
    <location>
        <begin position="965"/>
        <end position="1056"/>
    </location>
</feature>
<feature type="zinc finger region" description="PHD-type" evidence="3">
    <location>
        <begin position="786"/>
        <end position="834"/>
    </location>
</feature>
<feature type="region of interest" description="Disordered" evidence="5">
    <location>
        <begin position="1"/>
        <end position="102"/>
    </location>
</feature>
<feature type="region of interest" description="Disordered" evidence="5">
    <location>
        <begin position="112"/>
        <end position="131"/>
    </location>
</feature>
<feature type="region of interest" description="Disordered" evidence="5">
    <location>
        <begin position="198"/>
        <end position="227"/>
    </location>
</feature>
<feature type="region of interest" description="Disordered" evidence="5">
    <location>
        <begin position="448"/>
        <end position="600"/>
    </location>
</feature>
<feature type="region of interest" description="Disordered" evidence="5">
    <location>
        <begin position="645"/>
        <end position="781"/>
    </location>
</feature>
<feature type="region of interest" description="Disordered" evidence="5">
    <location>
        <begin position="857"/>
        <end position="895"/>
    </location>
</feature>
<feature type="region of interest" description="Disordered" evidence="5">
    <location>
        <begin position="1089"/>
        <end position="1318"/>
    </location>
</feature>
<feature type="region of interest" description="Disordered" evidence="5">
    <location>
        <begin position="1356"/>
        <end position="1623"/>
    </location>
</feature>
<feature type="coiled-coil region" evidence="2">
    <location>
        <begin position="1093"/>
        <end position="1201"/>
    </location>
</feature>
<feature type="coiled-coil region" evidence="2">
    <location>
        <begin position="1364"/>
        <end position="1401"/>
    </location>
</feature>
<feature type="compositionally biased region" description="Basic and acidic residues" evidence="5">
    <location>
        <begin position="62"/>
        <end position="71"/>
    </location>
</feature>
<feature type="compositionally biased region" description="Low complexity" evidence="5">
    <location>
        <begin position="77"/>
        <end position="100"/>
    </location>
</feature>
<feature type="compositionally biased region" description="Polar residues" evidence="5">
    <location>
        <begin position="206"/>
        <end position="227"/>
    </location>
</feature>
<feature type="compositionally biased region" description="Basic and acidic residues" evidence="5">
    <location>
        <begin position="554"/>
        <end position="573"/>
    </location>
</feature>
<feature type="compositionally biased region" description="Pro residues" evidence="5">
    <location>
        <begin position="587"/>
        <end position="597"/>
    </location>
</feature>
<feature type="compositionally biased region" description="Polar residues" evidence="5">
    <location>
        <begin position="645"/>
        <end position="669"/>
    </location>
</feature>
<feature type="compositionally biased region" description="Basic residues" evidence="5">
    <location>
        <begin position="723"/>
        <end position="733"/>
    </location>
</feature>
<feature type="compositionally biased region" description="Acidic residues" evidence="5">
    <location>
        <begin position="772"/>
        <end position="781"/>
    </location>
</feature>
<feature type="compositionally biased region" description="Polar residues" evidence="5">
    <location>
        <begin position="873"/>
        <end position="882"/>
    </location>
</feature>
<feature type="compositionally biased region" description="Basic and acidic residues" evidence="5">
    <location>
        <begin position="1089"/>
        <end position="1157"/>
    </location>
</feature>
<feature type="compositionally biased region" description="Basic and acidic residues" evidence="5">
    <location>
        <begin position="1172"/>
        <end position="1194"/>
    </location>
</feature>
<feature type="compositionally biased region" description="Polar residues" evidence="5">
    <location>
        <begin position="1242"/>
        <end position="1252"/>
    </location>
</feature>
<feature type="compositionally biased region" description="Low complexity" evidence="5">
    <location>
        <begin position="1282"/>
        <end position="1293"/>
    </location>
</feature>
<feature type="compositionally biased region" description="Basic and acidic residues" evidence="5">
    <location>
        <begin position="1365"/>
        <end position="1378"/>
    </location>
</feature>
<feature type="compositionally biased region" description="Basic and acidic residues" evidence="5">
    <location>
        <begin position="1388"/>
        <end position="1406"/>
    </location>
</feature>
<feature type="compositionally biased region" description="Basic and acidic residues" evidence="5">
    <location>
        <begin position="1413"/>
        <end position="1429"/>
    </location>
</feature>
<feature type="compositionally biased region" description="Basic and acidic residues" evidence="5">
    <location>
        <begin position="1447"/>
        <end position="1464"/>
    </location>
</feature>
<feature type="compositionally biased region" description="Polar residues" evidence="5">
    <location>
        <begin position="1533"/>
        <end position="1544"/>
    </location>
</feature>
<gene>
    <name evidence="11" type="primary">set-9</name>
    <name evidence="11" type="ORF">F15E6.1</name>
</gene>
<organism evidence="10">
    <name type="scientific">Caenorhabditis elegans</name>
    <dbReference type="NCBI Taxonomy" id="6239"/>
    <lineage>
        <taxon>Eukaryota</taxon>
        <taxon>Metazoa</taxon>
        <taxon>Ecdysozoa</taxon>
        <taxon>Nematoda</taxon>
        <taxon>Chromadorea</taxon>
        <taxon>Rhabditida</taxon>
        <taxon>Rhabditina</taxon>
        <taxon>Rhabditomorpha</taxon>
        <taxon>Rhabditoidea</taxon>
        <taxon>Rhabditidae</taxon>
        <taxon>Peloderinae</taxon>
        <taxon>Caenorhabditis</taxon>
    </lineage>
</organism>
<sequence length="1623" mass="179056">MADGEHTLPADEELFEQPPPQQQQPEIAEPIVMAQEPIQGVSEDPQASEATHEAPDNYPVDHQMENQEFYHEPQIPEPQQIPQIPVFQPAAYNPPNYVAPQQRANNFGEPAAADARPLTEQEQLAAERPTEDTVWIDSDDDTDVEEAILRANFWLPYSDHNYDPPDPADRIILPTEGPFPCIAGLDEDCNIVKQWMPEDAVGPGSPGTQYRRNQQAGGGLPSTSVASQQQQLPVRHNIQNRPMVAAQPFSIGGNQVEYGGMDSRMQQRGVVRDGPQYRVMNDFGNGLPMRGLLPPRNSPAANAINRAREQQQQMYHQAGARGSLQQRAAPAPADPTPGSYQHIVNAVPGGGANPMRRVPPQARPGMIGGAANNNRARPTHVTRPMDTQEFEHPVAPAAAPPHRVVDVAPHRMTPEQRQELQQMNRQRAAPQFPAAAAQRSAEVIVIQQRPGASSRAPRPSMAQEDLLRSPTRRLSERVPQEHQTPVLEPRRFQVKVTDTYSTPIPKASDQLPAQLTEEDPPEESAAAAAPEDVPDAAPEDPPKVILKPTPPHRMTQEEKNAHFARLTTDKEKPTSSTSILPQDAAPPHVPPPPPPLVLRPHHQDETLAMVQSVFESKPRQPDTPKDKETISKIADLLRFSADEFTGQSGSSAAARQRTVSGSAARAQTYQMHHQQQQHHHQMPMDQRKRPSSGRYDALMGAMPLQQQPPPPPSQFQHTDSIAHRPRGRPKGTRHPSVAVQPQRSGGARTLPPRAQTVAMSARNGANAKNSDSESEGIDEAAEESWTMRCHCGMDHGDGDTIECEGCKTWQHMACMGLTLKSNTSKYKCEMCLPRRLPVSKAEAAREQERILNRLRAAARKQKRKSEPVEQKQKSSQPSTSRKSAPMALQQPAEPRVAQLNDYSKQASALLFGMEQTAGADTLLAESRLHKKARRMFVEEAVEALVTTDLVQIRQVILEVNGHVSMSSEVKRQPGGGNCIFMYDGLMKGTAGEDMGDGQELVCIDTKRKGNDTKFTRRSCVPNCVLKHVLGSNATLGIMIVATKDITRNTEVTLPFDADWRESEVELECAEHMKELQACPFESERRRFAAERHRAMDHKKQEAEEARRADEERRRLEEEVRRERAAKTKQMDEAEKARLEAEKAAEKEKKAKERKKMEASAAAAPESTNSITAREERRIQQAEEMFRRQEEEGKRKEARRRSKSVTPGVLEAAGTAAREDAPEASIPVPAPSPPASRRSVSRTTQPSTSSFATPTEPPAKNKRMRSVVPPKSEPASSAKRVRATTVATPKATTANDSRKRTASATGKTPVAKRSKNVAPTSFALALIEKELREQARNSTVLEMILPDYIMNEERSGLLAGQSPDFSEVRAQIEEENRMKERSRKREAKKKAVEKEKKEHRKEPKKTNEPGPAPKSEKAVEKAVEKVEKKPKSPQKPPAKPTAQNPPLKKTEEVDGIEREASESSSKESSVAPEEKKNPKKITFAEYNSRRSQKREAGECSTPPAVTRRGFIPSTEGEDLVNVELSAIPLDDHPSSSNTAPTTTIAPSVGGAPKPTSVVVKSPSTRSRTRGAASESADDAPAEHSMSLQDRVFSMFGSTVDAPAPPPPPASAETNSRRSRSTRWN</sequence>
<protein>
    <recommendedName>
        <fullName evidence="9">Histone-lysine N-methyltransferase set-9</fullName>
        <ecNumber evidence="1">2.1.1.-</ecNumber>
    </recommendedName>
</protein>
<proteinExistence type="evidence at protein level"/>
<name>SET9_CAEEL</name>
<accession>O44498</accession>